<dbReference type="EC" id="4.1.1.39" evidence="1"/>
<dbReference type="EMBL" id="DQ897681">
    <property type="protein sequence ID" value="ABI17270.1"/>
    <property type="molecule type" value="Genomic_DNA"/>
</dbReference>
<dbReference type="EMBL" id="DQ897681">
    <property type="protein sequence ID" value="ABI17368.1"/>
    <property type="molecule type" value="Genomic_DNA"/>
</dbReference>
<dbReference type="EMBL" id="L01941">
    <property type="protein sequence ID" value="AAA84577.2"/>
    <property type="molecule type" value="Genomic_DNA"/>
</dbReference>
<dbReference type="SMR" id="P28439"/>
<dbReference type="GO" id="GO:0009507">
    <property type="term" value="C:chloroplast"/>
    <property type="evidence" value="ECO:0007669"/>
    <property type="project" value="UniProtKB-SubCell"/>
</dbReference>
<dbReference type="GO" id="GO:0000287">
    <property type="term" value="F:magnesium ion binding"/>
    <property type="evidence" value="ECO:0007669"/>
    <property type="project" value="UniProtKB-UniRule"/>
</dbReference>
<dbReference type="GO" id="GO:0004497">
    <property type="term" value="F:monooxygenase activity"/>
    <property type="evidence" value="ECO:0007669"/>
    <property type="project" value="UniProtKB-KW"/>
</dbReference>
<dbReference type="GO" id="GO:0016984">
    <property type="term" value="F:ribulose-bisphosphate carboxylase activity"/>
    <property type="evidence" value="ECO:0007669"/>
    <property type="project" value="UniProtKB-UniRule"/>
</dbReference>
<dbReference type="GO" id="GO:0009853">
    <property type="term" value="P:photorespiration"/>
    <property type="evidence" value="ECO:0007669"/>
    <property type="project" value="UniProtKB-KW"/>
</dbReference>
<dbReference type="GO" id="GO:0019253">
    <property type="term" value="P:reductive pentose-phosphate cycle"/>
    <property type="evidence" value="ECO:0007669"/>
    <property type="project" value="UniProtKB-UniRule"/>
</dbReference>
<dbReference type="CDD" id="cd08212">
    <property type="entry name" value="RuBisCO_large_I"/>
    <property type="match status" value="1"/>
</dbReference>
<dbReference type="FunFam" id="3.20.20.110:FF:000001">
    <property type="entry name" value="Ribulose bisphosphate carboxylase large chain"/>
    <property type="match status" value="1"/>
</dbReference>
<dbReference type="FunFam" id="3.30.70.150:FF:000001">
    <property type="entry name" value="Ribulose bisphosphate carboxylase large chain"/>
    <property type="match status" value="1"/>
</dbReference>
<dbReference type="Gene3D" id="3.20.20.110">
    <property type="entry name" value="Ribulose bisphosphate carboxylase, large subunit, C-terminal domain"/>
    <property type="match status" value="1"/>
</dbReference>
<dbReference type="Gene3D" id="3.30.70.150">
    <property type="entry name" value="RuBisCO large subunit, N-terminal domain"/>
    <property type="match status" value="1"/>
</dbReference>
<dbReference type="HAMAP" id="MF_01338">
    <property type="entry name" value="RuBisCO_L_type1"/>
    <property type="match status" value="1"/>
</dbReference>
<dbReference type="InterPro" id="IPR033966">
    <property type="entry name" value="RuBisCO"/>
</dbReference>
<dbReference type="InterPro" id="IPR020878">
    <property type="entry name" value="RuBisCo_large_chain_AS"/>
</dbReference>
<dbReference type="InterPro" id="IPR000685">
    <property type="entry name" value="RuBisCO_lsu_C"/>
</dbReference>
<dbReference type="InterPro" id="IPR036376">
    <property type="entry name" value="RuBisCO_lsu_C_sf"/>
</dbReference>
<dbReference type="InterPro" id="IPR017443">
    <property type="entry name" value="RuBisCO_lsu_fd_N"/>
</dbReference>
<dbReference type="InterPro" id="IPR036422">
    <property type="entry name" value="RuBisCO_lsu_N_sf"/>
</dbReference>
<dbReference type="InterPro" id="IPR020888">
    <property type="entry name" value="RuBisCO_lsuI"/>
</dbReference>
<dbReference type="NCBIfam" id="NF003252">
    <property type="entry name" value="PRK04208.1"/>
    <property type="match status" value="1"/>
</dbReference>
<dbReference type="PANTHER" id="PTHR42704">
    <property type="entry name" value="RIBULOSE BISPHOSPHATE CARBOXYLASE"/>
    <property type="match status" value="1"/>
</dbReference>
<dbReference type="PANTHER" id="PTHR42704:SF15">
    <property type="entry name" value="RIBULOSE BISPHOSPHATE CARBOXYLASE LARGE CHAIN"/>
    <property type="match status" value="1"/>
</dbReference>
<dbReference type="Pfam" id="PF00016">
    <property type="entry name" value="RuBisCO_large"/>
    <property type="match status" value="1"/>
</dbReference>
<dbReference type="Pfam" id="PF02788">
    <property type="entry name" value="RuBisCO_large_N"/>
    <property type="match status" value="1"/>
</dbReference>
<dbReference type="SFLD" id="SFLDG01052">
    <property type="entry name" value="RuBisCO"/>
    <property type="match status" value="1"/>
</dbReference>
<dbReference type="SFLD" id="SFLDS00014">
    <property type="entry name" value="RuBisCO"/>
    <property type="match status" value="1"/>
</dbReference>
<dbReference type="SFLD" id="SFLDG00301">
    <property type="entry name" value="RuBisCO-like_proteins"/>
    <property type="match status" value="1"/>
</dbReference>
<dbReference type="SUPFAM" id="SSF51649">
    <property type="entry name" value="RuBisCo, C-terminal domain"/>
    <property type="match status" value="1"/>
</dbReference>
<dbReference type="SUPFAM" id="SSF54966">
    <property type="entry name" value="RuBisCO, large subunit, small (N-terminal) domain"/>
    <property type="match status" value="1"/>
</dbReference>
<dbReference type="PROSITE" id="PS00157">
    <property type="entry name" value="RUBISCO_LARGE"/>
    <property type="match status" value="1"/>
</dbReference>
<reference key="1">
    <citation type="journal article" date="2006" name="Mol. Biol. Evol.">
        <title>The complete chloroplast genome sequence of Pelargonium x hortorum: organization and evolution of the largest and most highly rearranged chloroplast genome of land plants.</title>
        <authorList>
            <person name="Chumley T.W."/>
            <person name="Palmer J.D."/>
            <person name="Mower J.P."/>
            <person name="Fourcade H.M."/>
            <person name="Calie P.J."/>
            <person name="Boore J.L."/>
            <person name="Jansen R.K."/>
        </authorList>
    </citation>
    <scope>NUCLEOTIDE SEQUENCE [LARGE SCALE GENOMIC DNA]</scope>
    <source>
        <strain>cv. Ringo White</strain>
    </source>
</reference>
<reference key="2">
    <citation type="journal article" date="1992" name="Science">
        <title>Carnivorous plants: phylogeny and structural evolution.</title>
        <authorList>
            <person name="Albert V.A."/>
            <person name="Williams S.E."/>
            <person name="Chase M.W."/>
        </authorList>
    </citation>
    <scope>NUCLEOTIDE SEQUENCE [GENOMIC DNA] OF 10-472</scope>
    <source>
        <tissue>Leaf</tissue>
    </source>
</reference>
<keyword id="KW-0007">Acetylation</keyword>
<keyword id="KW-0113">Calvin cycle</keyword>
<keyword id="KW-0120">Carbon dioxide fixation</keyword>
<keyword id="KW-0150">Chloroplast</keyword>
<keyword id="KW-1015">Disulfide bond</keyword>
<keyword id="KW-0456">Lyase</keyword>
<keyword id="KW-0460">Magnesium</keyword>
<keyword id="KW-0479">Metal-binding</keyword>
<keyword id="KW-0488">Methylation</keyword>
<keyword id="KW-0503">Monooxygenase</keyword>
<keyword id="KW-0560">Oxidoreductase</keyword>
<keyword id="KW-0601">Photorespiration</keyword>
<keyword id="KW-0602">Photosynthesis</keyword>
<keyword id="KW-0934">Plastid</keyword>
<organism>
    <name type="scientific">Pelargonium hortorum</name>
    <name type="common">Common geranium</name>
    <name type="synonym">Pelargonium inquinans x Pelargonium zonale</name>
    <dbReference type="NCBI Taxonomy" id="4031"/>
    <lineage>
        <taxon>Eukaryota</taxon>
        <taxon>Viridiplantae</taxon>
        <taxon>Streptophyta</taxon>
        <taxon>Embryophyta</taxon>
        <taxon>Tracheophyta</taxon>
        <taxon>Spermatophyta</taxon>
        <taxon>Magnoliopsida</taxon>
        <taxon>eudicotyledons</taxon>
        <taxon>Gunneridae</taxon>
        <taxon>Pentapetalae</taxon>
        <taxon>rosids</taxon>
        <taxon>malvids</taxon>
        <taxon>Geraniales</taxon>
        <taxon>Geraniaceae</taxon>
        <taxon>Pelargonium</taxon>
    </lineage>
</organism>
<geneLocation type="chloroplast"/>
<accession>P28439</accession>
<accession>Q06FK4</accession>
<evidence type="ECO:0000255" key="1">
    <source>
        <dbReference type="HAMAP-Rule" id="MF_01338"/>
    </source>
</evidence>
<evidence type="ECO:0000305" key="2"/>
<name>RBL_PELHO</name>
<proteinExistence type="inferred from homology"/>
<feature type="propeptide" id="PRO_0000262595" evidence="1">
    <location>
        <begin position="1"/>
        <end position="2"/>
    </location>
</feature>
<feature type="chain" id="PRO_0000062559" description="Ribulose bisphosphate carboxylase large chain">
    <location>
        <begin position="3"/>
        <end position="475"/>
    </location>
</feature>
<feature type="active site" description="Proton acceptor" evidence="1">
    <location>
        <position position="175"/>
    </location>
</feature>
<feature type="active site" description="Proton acceptor" evidence="1">
    <location>
        <position position="294"/>
    </location>
</feature>
<feature type="binding site" description="in homodimeric partner" evidence="1">
    <location>
        <position position="123"/>
    </location>
    <ligand>
        <name>substrate</name>
    </ligand>
</feature>
<feature type="binding site" evidence="1">
    <location>
        <position position="173"/>
    </location>
    <ligand>
        <name>substrate</name>
    </ligand>
</feature>
<feature type="binding site" evidence="1">
    <location>
        <position position="177"/>
    </location>
    <ligand>
        <name>substrate</name>
    </ligand>
</feature>
<feature type="binding site" description="via carbamate group" evidence="1">
    <location>
        <position position="201"/>
    </location>
    <ligand>
        <name>Mg(2+)</name>
        <dbReference type="ChEBI" id="CHEBI:18420"/>
    </ligand>
</feature>
<feature type="binding site" evidence="1">
    <location>
        <position position="203"/>
    </location>
    <ligand>
        <name>Mg(2+)</name>
        <dbReference type="ChEBI" id="CHEBI:18420"/>
    </ligand>
</feature>
<feature type="binding site" evidence="1">
    <location>
        <position position="204"/>
    </location>
    <ligand>
        <name>Mg(2+)</name>
        <dbReference type="ChEBI" id="CHEBI:18420"/>
    </ligand>
</feature>
<feature type="binding site" evidence="1">
    <location>
        <position position="295"/>
    </location>
    <ligand>
        <name>substrate</name>
    </ligand>
</feature>
<feature type="binding site" evidence="1">
    <location>
        <position position="327"/>
    </location>
    <ligand>
        <name>substrate</name>
    </ligand>
</feature>
<feature type="binding site" evidence="1">
    <location>
        <position position="379"/>
    </location>
    <ligand>
        <name>substrate</name>
    </ligand>
</feature>
<feature type="site" description="Transition state stabilizer" evidence="1">
    <location>
        <position position="334"/>
    </location>
</feature>
<feature type="modified residue" description="N-acetylproline" evidence="1">
    <location>
        <position position="3"/>
    </location>
</feature>
<feature type="modified residue" description="N6,N6,N6-trimethyllysine" evidence="1">
    <location>
        <position position="14"/>
    </location>
</feature>
<feature type="modified residue" description="N6-carboxylysine" evidence="1">
    <location>
        <position position="201"/>
    </location>
</feature>
<feature type="disulfide bond" description="Interchain; in linked form" evidence="1">
    <location>
        <position position="247"/>
    </location>
</feature>
<feature type="sequence conflict" description="In Ref. 2; AAA84577." evidence="2" ref="2">
    <original>A</original>
    <variation>G</variation>
    <location>
        <position position="55"/>
    </location>
</feature>
<feature type="sequence conflict" description="In Ref. 2; AAA84577." evidence="2" ref="2">
    <original>T</original>
    <variation>P</variation>
    <location>
        <position position="142"/>
    </location>
</feature>
<feature type="sequence conflict" description="In Ref. 2; AAA84577." evidence="2" ref="2">
    <original>Y</original>
    <variation>F</variation>
    <location>
        <position position="190"/>
    </location>
</feature>
<feature type="sequence conflict" description="In Ref. 2; AAA84577." evidence="2" ref="2">
    <original>T</original>
    <variation>A</variation>
    <location>
        <position position="222"/>
    </location>
</feature>
<feature type="sequence conflict" description="In Ref. 2; AAA84577." evidence="2" ref="2">
    <original>L</original>
    <variation>I</variation>
    <location>
        <position position="225"/>
    </location>
</feature>
<feature type="sequence conflict" description="In Ref. 2; AAA84577." evidence="2" ref="2">
    <original>T</original>
    <variation>A</variation>
    <location>
        <position position="230"/>
    </location>
</feature>
<feature type="sequence conflict" description="In Ref. 2; AAA84577." evidence="2" ref="2">
    <original>I</original>
    <variation>M</variation>
    <location>
        <position position="251"/>
    </location>
</feature>
<feature type="sequence conflict" description="In Ref. 2; AAA84577." evidence="2" ref="2">
    <original>I</original>
    <variation>V</variation>
    <location>
        <position position="354"/>
    </location>
</feature>
<feature type="sequence conflict" description="In Ref. 2; AAA84577." evidence="2" ref="2">
    <original>P</original>
    <variation>T</variation>
    <location>
        <position position="376"/>
    </location>
</feature>
<feature type="sequence conflict" description="In Ref. 2; AAA84577." evidence="2" ref="2">
    <original>R</original>
    <variation>T</variation>
    <location>
        <position position="439"/>
    </location>
</feature>
<feature type="sequence conflict" description="In Ref. 2; AAA84577." evidence="2" ref="2">
    <original>E</original>
    <variation>A</variation>
    <location>
        <position position="443"/>
    </location>
</feature>
<feature type="sequence conflict" description="In Ref. 2; AAA84577." evidence="2" ref="2">
    <original>R</original>
    <variation>T</variation>
    <location>
        <position position="453"/>
    </location>
</feature>
<feature type="sequence conflict" description="In Ref. 2; AAA84577." evidence="2" ref="2">
    <original>E</original>
    <variation>A</variation>
    <location>
        <position position="470"/>
    </location>
</feature>
<protein>
    <recommendedName>
        <fullName evidence="1">Ribulose bisphosphate carboxylase large chain</fullName>
        <shortName evidence="1">RuBisCO large subunit</shortName>
        <ecNumber evidence="1">4.1.1.39</ecNumber>
    </recommendedName>
</protein>
<sequence>MSPQTETKASVGFKAGVKDYKLTYYTPDYETKDTDILAAFRVTPQPGVPPEEAGAAVAAESSTGTWTTVWTDGLTSLDRYKGRCYHIEPVAGEENQYIAYVAYPLDLFEEGSVTNMFTSIVGNVFGFKALRALRLEDLRIPTAYVKTFQGPPHGIQVERDKLNKYGRPLLGCTIKPKLGLSAKNYGRAVYECLRGGLDFTKDDENVNSQPFMRWRDRFLFCTEALYKAQTETGEIKGHYLNATAGTCEEMIKRAVFARELGVPIVMHDYLTGGFTANTSLAHYCRDNGLLLHIHRAMHAVIDRQKNHGIHFRVLAKALRMSGGDHIHSGTVVGKLEGERDITLGFVDLLRDDFIEKDRSRGIYFTQDWVSLPGVLPVASGGIHVWHMPALTEIFGDDSVLQFGGGTLGHPWGNAPGAVANRVALEACVQARNEGRDLAREGNEIIRKACKWSRELAAACEVWKEIKFEFEAMDTL</sequence>
<comment type="function">
    <text evidence="1">RuBisCO catalyzes two reactions: the carboxylation of D-ribulose 1,5-bisphosphate, the primary event in carbon dioxide fixation, as well as the oxidative fragmentation of the pentose substrate in the photorespiration process. Both reactions occur simultaneously and in competition at the same active site.</text>
</comment>
<comment type="catalytic activity">
    <reaction evidence="1">
        <text>2 (2R)-3-phosphoglycerate + 2 H(+) = D-ribulose 1,5-bisphosphate + CO2 + H2O</text>
        <dbReference type="Rhea" id="RHEA:23124"/>
        <dbReference type="ChEBI" id="CHEBI:15377"/>
        <dbReference type="ChEBI" id="CHEBI:15378"/>
        <dbReference type="ChEBI" id="CHEBI:16526"/>
        <dbReference type="ChEBI" id="CHEBI:57870"/>
        <dbReference type="ChEBI" id="CHEBI:58272"/>
        <dbReference type="EC" id="4.1.1.39"/>
    </reaction>
</comment>
<comment type="catalytic activity">
    <reaction evidence="1">
        <text>D-ribulose 1,5-bisphosphate + O2 = 2-phosphoglycolate + (2R)-3-phosphoglycerate + 2 H(+)</text>
        <dbReference type="Rhea" id="RHEA:36631"/>
        <dbReference type="ChEBI" id="CHEBI:15378"/>
        <dbReference type="ChEBI" id="CHEBI:15379"/>
        <dbReference type="ChEBI" id="CHEBI:57870"/>
        <dbReference type="ChEBI" id="CHEBI:58033"/>
        <dbReference type="ChEBI" id="CHEBI:58272"/>
    </reaction>
</comment>
<comment type="cofactor">
    <cofactor evidence="1">
        <name>Mg(2+)</name>
        <dbReference type="ChEBI" id="CHEBI:18420"/>
    </cofactor>
    <text evidence="1">Binds 1 Mg(2+) ion per subunit.</text>
</comment>
<comment type="subunit">
    <text evidence="1">Heterohexadecamer of 8 large chains and 8 small chains; disulfide-linked. The disulfide link is formed within the large subunit homodimers.</text>
</comment>
<comment type="subcellular location">
    <subcellularLocation>
        <location>Plastid</location>
        <location>Chloroplast</location>
    </subcellularLocation>
</comment>
<comment type="PTM">
    <text evidence="1">The disulfide bond which can form in the large chain dimeric partners within the hexadecamer appears to be associated with oxidative stress and protein turnover.</text>
</comment>
<comment type="miscellaneous">
    <text evidence="1">The basic functional RuBisCO is composed of a large chain homodimer in a 'head-to-tail' conformation. In form I RuBisCO this homodimer is arranged in a barrel-like tetramer with the small subunits forming a tetrameric 'cap' on each end of the 'barrel'.</text>
</comment>
<comment type="similarity">
    <text evidence="1">Belongs to the RuBisCO large chain family. Type I subfamily.</text>
</comment>
<gene>
    <name evidence="1" type="primary">rbcL-A</name>
</gene>
<gene>
    <name evidence="1" type="primary">rbcL-B</name>
</gene>